<accession>A1RMB7</accession>
<organism>
    <name type="scientific">Shewanella sp. (strain W3-18-1)</name>
    <dbReference type="NCBI Taxonomy" id="351745"/>
    <lineage>
        <taxon>Bacteria</taxon>
        <taxon>Pseudomonadati</taxon>
        <taxon>Pseudomonadota</taxon>
        <taxon>Gammaproteobacteria</taxon>
        <taxon>Alteromonadales</taxon>
        <taxon>Shewanellaceae</taxon>
        <taxon>Shewanella</taxon>
    </lineage>
</organism>
<name>RIMM_SHESW</name>
<keyword id="KW-0143">Chaperone</keyword>
<keyword id="KW-0963">Cytoplasm</keyword>
<keyword id="KW-0690">Ribosome biogenesis</keyword>
<keyword id="KW-0698">rRNA processing</keyword>
<feature type="chain" id="PRO_0000321762" description="Ribosome maturation factor RimM">
    <location>
        <begin position="1"/>
        <end position="176"/>
    </location>
</feature>
<feature type="domain" description="PRC barrel" evidence="1">
    <location>
        <begin position="97"/>
        <end position="176"/>
    </location>
</feature>
<comment type="function">
    <text evidence="1">An accessory protein needed during the final step in the assembly of 30S ribosomal subunit, possibly for assembly of the head region. Essential for efficient processing of 16S rRNA. May be needed both before and after RbfA during the maturation of 16S rRNA. It has affinity for free ribosomal 30S subunits but not for 70S ribosomes.</text>
</comment>
<comment type="subunit">
    <text evidence="1">Binds ribosomal protein uS19.</text>
</comment>
<comment type="subcellular location">
    <subcellularLocation>
        <location evidence="1">Cytoplasm</location>
    </subcellularLocation>
</comment>
<comment type="domain">
    <text evidence="1">The PRC barrel domain binds ribosomal protein uS19.</text>
</comment>
<comment type="similarity">
    <text evidence="1">Belongs to the RimM family.</text>
</comment>
<evidence type="ECO:0000255" key="1">
    <source>
        <dbReference type="HAMAP-Rule" id="MF_00014"/>
    </source>
</evidence>
<proteinExistence type="inferred from homology"/>
<reference key="1">
    <citation type="submission" date="2006-12" db="EMBL/GenBank/DDBJ databases">
        <title>Complete sequence of Shewanella sp. W3-18-1.</title>
        <authorList>
            <consortium name="US DOE Joint Genome Institute"/>
            <person name="Copeland A."/>
            <person name="Lucas S."/>
            <person name="Lapidus A."/>
            <person name="Barry K."/>
            <person name="Detter J.C."/>
            <person name="Glavina del Rio T."/>
            <person name="Hammon N."/>
            <person name="Israni S."/>
            <person name="Dalin E."/>
            <person name="Tice H."/>
            <person name="Pitluck S."/>
            <person name="Chain P."/>
            <person name="Malfatti S."/>
            <person name="Shin M."/>
            <person name="Vergez L."/>
            <person name="Schmutz J."/>
            <person name="Larimer F."/>
            <person name="Land M."/>
            <person name="Hauser L."/>
            <person name="Kyrpides N."/>
            <person name="Lykidis A."/>
            <person name="Tiedje J."/>
            <person name="Richardson P."/>
        </authorList>
    </citation>
    <scope>NUCLEOTIDE SEQUENCE [LARGE SCALE GENOMIC DNA]</scope>
    <source>
        <strain>W3-18-1</strain>
    </source>
</reference>
<sequence length="176" mass="19962">MSSNQQPVVLGKLGSCHGIKGWLRITAYTDSVEGIFDYSPWLIKENGEWREVKVTQWRYQGKAVVAELEGVNTREQAQMLTNCEIAILPEQMDALPEDEFYWRDLIGCEVVNTTGYNMGIVDQIVETGSNDVLLVKANAKDSFGKVERMIPFVPEQFIKTVDVQGKQILVDWDPDF</sequence>
<protein>
    <recommendedName>
        <fullName evidence="1">Ribosome maturation factor RimM</fullName>
    </recommendedName>
</protein>
<gene>
    <name evidence="1" type="primary">rimM</name>
    <name type="ordered locus">Sputw3181_2995</name>
</gene>
<dbReference type="EMBL" id="CP000503">
    <property type="protein sequence ID" value="ABM25812.1"/>
    <property type="molecule type" value="Genomic_DNA"/>
</dbReference>
<dbReference type="RefSeq" id="WP_011790264.1">
    <property type="nucleotide sequence ID" value="NC_008750.1"/>
</dbReference>
<dbReference type="SMR" id="A1RMB7"/>
<dbReference type="GeneID" id="67442685"/>
<dbReference type="KEGG" id="shw:Sputw3181_2995"/>
<dbReference type="HOGENOM" id="CLU_077636_1_0_6"/>
<dbReference type="Proteomes" id="UP000002597">
    <property type="component" value="Chromosome"/>
</dbReference>
<dbReference type="GO" id="GO:0005737">
    <property type="term" value="C:cytoplasm"/>
    <property type="evidence" value="ECO:0007669"/>
    <property type="project" value="UniProtKB-SubCell"/>
</dbReference>
<dbReference type="GO" id="GO:0005840">
    <property type="term" value="C:ribosome"/>
    <property type="evidence" value="ECO:0007669"/>
    <property type="project" value="InterPro"/>
</dbReference>
<dbReference type="GO" id="GO:0043022">
    <property type="term" value="F:ribosome binding"/>
    <property type="evidence" value="ECO:0007669"/>
    <property type="project" value="InterPro"/>
</dbReference>
<dbReference type="GO" id="GO:0042274">
    <property type="term" value="P:ribosomal small subunit biogenesis"/>
    <property type="evidence" value="ECO:0007669"/>
    <property type="project" value="UniProtKB-UniRule"/>
</dbReference>
<dbReference type="GO" id="GO:0006364">
    <property type="term" value="P:rRNA processing"/>
    <property type="evidence" value="ECO:0007669"/>
    <property type="project" value="UniProtKB-UniRule"/>
</dbReference>
<dbReference type="Gene3D" id="2.30.30.240">
    <property type="entry name" value="PRC-barrel domain"/>
    <property type="match status" value="1"/>
</dbReference>
<dbReference type="Gene3D" id="2.40.30.60">
    <property type="entry name" value="RimM"/>
    <property type="match status" value="1"/>
</dbReference>
<dbReference type="HAMAP" id="MF_00014">
    <property type="entry name" value="Ribosome_mat_RimM"/>
    <property type="match status" value="1"/>
</dbReference>
<dbReference type="InterPro" id="IPR011033">
    <property type="entry name" value="PRC_barrel-like_sf"/>
</dbReference>
<dbReference type="InterPro" id="IPR056792">
    <property type="entry name" value="PRC_RimM"/>
</dbReference>
<dbReference type="InterPro" id="IPR011961">
    <property type="entry name" value="RimM"/>
</dbReference>
<dbReference type="InterPro" id="IPR002676">
    <property type="entry name" value="RimM_N"/>
</dbReference>
<dbReference type="InterPro" id="IPR036976">
    <property type="entry name" value="RimM_N_sf"/>
</dbReference>
<dbReference type="InterPro" id="IPR009000">
    <property type="entry name" value="Transl_B-barrel_sf"/>
</dbReference>
<dbReference type="NCBIfam" id="TIGR02273">
    <property type="entry name" value="16S_RimM"/>
    <property type="match status" value="1"/>
</dbReference>
<dbReference type="PANTHER" id="PTHR33692">
    <property type="entry name" value="RIBOSOME MATURATION FACTOR RIMM"/>
    <property type="match status" value="1"/>
</dbReference>
<dbReference type="PANTHER" id="PTHR33692:SF1">
    <property type="entry name" value="RIBOSOME MATURATION FACTOR RIMM"/>
    <property type="match status" value="1"/>
</dbReference>
<dbReference type="Pfam" id="PF24986">
    <property type="entry name" value="PRC_RimM"/>
    <property type="match status" value="1"/>
</dbReference>
<dbReference type="Pfam" id="PF01782">
    <property type="entry name" value="RimM"/>
    <property type="match status" value="1"/>
</dbReference>
<dbReference type="SUPFAM" id="SSF50346">
    <property type="entry name" value="PRC-barrel domain"/>
    <property type="match status" value="1"/>
</dbReference>
<dbReference type="SUPFAM" id="SSF50447">
    <property type="entry name" value="Translation proteins"/>
    <property type="match status" value="1"/>
</dbReference>